<keyword id="KW-0963">Cytoplasm</keyword>
<keyword id="KW-0539">Nucleus</keyword>
<keyword id="KW-1185">Reference proteome</keyword>
<keyword id="KW-0677">Repeat</keyword>
<keyword id="KW-0802">TPR repeat</keyword>
<proteinExistence type="evidence at transcript level"/>
<accession>Q95MN9</accession>
<sequence>MDAALLLNVEGVKKTILHGGTGELPNFITGSRVIFHFRTMKCDEERTVIDDSRQVGQPMHIIIGNMFKLEVWEILLTSMRVHEVAEFWCDTIHTGVYPILSRSLRQMAQGKDPTEWHVHTCGLANMFAYHTLGYEDLDELQKEPQPLVFVIELLQVDAPSDYQRETWNLSNHEKMKAVPVLHGEGNRLFKLGRYEEASSKYQEAIICLRNLQTKEKPWEVQWLKLEKMINTLILNYCQCLLKKEEYYEVLEHTSDILRHHPGIVKAYYVRARAHAEVWNEAEAKADLRKVLELEPSMQKAVRRELRLLENRMAEKQEEERLRCRNMLSQGATQPPAEPPTEPPAQSSTEPPAEPPPAPSAELSAGPPAETATEPPPSPGHSLQH</sequence>
<gene>
    <name type="primary">AIPL1</name>
</gene>
<name>AIPL1_PANPA</name>
<dbReference type="EMBL" id="AF296413">
    <property type="protein sequence ID" value="AAK77957.1"/>
    <property type="molecule type" value="mRNA"/>
</dbReference>
<dbReference type="RefSeq" id="NP_001266158.1">
    <property type="nucleotide sequence ID" value="NM_001279229.1"/>
</dbReference>
<dbReference type="SMR" id="Q95MN9"/>
<dbReference type="STRING" id="9597.ENSPPAP00000001526"/>
<dbReference type="GeneID" id="100970167"/>
<dbReference type="KEGG" id="pps:100970167"/>
<dbReference type="CTD" id="23746"/>
<dbReference type="eggNOG" id="KOG0545">
    <property type="taxonomic scope" value="Eukaryota"/>
</dbReference>
<dbReference type="OrthoDB" id="10403at9604"/>
<dbReference type="Proteomes" id="UP000240080">
    <property type="component" value="Unplaced"/>
</dbReference>
<dbReference type="GO" id="GO:0005737">
    <property type="term" value="C:cytoplasm"/>
    <property type="evidence" value="ECO:0007669"/>
    <property type="project" value="UniProtKB-SubCell"/>
</dbReference>
<dbReference type="GO" id="GO:0005634">
    <property type="term" value="C:nucleus"/>
    <property type="evidence" value="ECO:0007669"/>
    <property type="project" value="UniProtKB-SubCell"/>
</dbReference>
<dbReference type="GO" id="GO:0003755">
    <property type="term" value="F:peptidyl-prolyl cis-trans isomerase activity"/>
    <property type="evidence" value="ECO:0007669"/>
    <property type="project" value="InterPro"/>
</dbReference>
<dbReference type="FunFam" id="1.25.40.10:FF:000052">
    <property type="entry name" value="Aryl-hydrocarbon-interacting protein-like 1"/>
    <property type="match status" value="1"/>
</dbReference>
<dbReference type="FunFam" id="3.10.50.40:FF:000018">
    <property type="entry name" value="Aryl-hydrocarbon-interacting protein-like 1"/>
    <property type="match status" value="1"/>
</dbReference>
<dbReference type="Gene3D" id="3.10.50.40">
    <property type="match status" value="1"/>
</dbReference>
<dbReference type="Gene3D" id="1.25.40.10">
    <property type="entry name" value="Tetratricopeptide repeat domain"/>
    <property type="match status" value="1"/>
</dbReference>
<dbReference type="InterPro" id="IPR039663">
    <property type="entry name" value="AIP/AIPL1/TTC9"/>
</dbReference>
<dbReference type="InterPro" id="IPR056277">
    <property type="entry name" value="PPIase_AIP"/>
</dbReference>
<dbReference type="InterPro" id="IPR046357">
    <property type="entry name" value="PPIase_dom_sf"/>
</dbReference>
<dbReference type="InterPro" id="IPR011990">
    <property type="entry name" value="TPR-like_helical_dom_sf"/>
</dbReference>
<dbReference type="InterPro" id="IPR019734">
    <property type="entry name" value="TPR_rpt"/>
</dbReference>
<dbReference type="PANTHER" id="PTHR11242">
    <property type="entry name" value="ARYL HYDROCARBON RECEPTOR INTERACTING PROTEIN RELATED"/>
    <property type="match status" value="1"/>
</dbReference>
<dbReference type="PANTHER" id="PTHR11242:SF2">
    <property type="entry name" value="ARYL-HYDROCARBON-INTERACTING PROTEIN-LIKE 1"/>
    <property type="match status" value="1"/>
</dbReference>
<dbReference type="Pfam" id="PF23322">
    <property type="entry name" value="PPIase_AIP"/>
    <property type="match status" value="1"/>
</dbReference>
<dbReference type="SMART" id="SM00028">
    <property type="entry name" value="TPR"/>
    <property type="match status" value="2"/>
</dbReference>
<dbReference type="SUPFAM" id="SSF54534">
    <property type="entry name" value="FKBP-like"/>
    <property type="match status" value="1"/>
</dbReference>
<dbReference type="SUPFAM" id="SSF48452">
    <property type="entry name" value="TPR-like"/>
    <property type="match status" value="1"/>
</dbReference>
<dbReference type="PROSITE" id="PS50293">
    <property type="entry name" value="TPR_REGION"/>
    <property type="match status" value="2"/>
</dbReference>
<reference key="1">
    <citation type="journal article" date="2001" name="Mamm. Genome">
        <title>Comparative analysis of aryl-hydrocarbon receptor interacting protein-like 1 (Aipl1), a gene associated with inherited retinal disease in humans.</title>
        <authorList>
            <person name="Sohocki M.M."/>
            <person name="Sullivan L.S."/>
            <person name="Tirpak D.L."/>
            <person name="Daiger S.P."/>
        </authorList>
    </citation>
    <scope>NUCLEOTIDE SEQUENCE [MRNA]</scope>
</reference>
<protein>
    <recommendedName>
        <fullName>Aryl-hydrocarbon-interacting protein-like 1</fullName>
    </recommendedName>
</protein>
<organism>
    <name type="scientific">Pan paniscus</name>
    <name type="common">Pygmy chimpanzee</name>
    <name type="synonym">Bonobo</name>
    <dbReference type="NCBI Taxonomy" id="9597"/>
    <lineage>
        <taxon>Eukaryota</taxon>
        <taxon>Metazoa</taxon>
        <taxon>Chordata</taxon>
        <taxon>Craniata</taxon>
        <taxon>Vertebrata</taxon>
        <taxon>Euteleostomi</taxon>
        <taxon>Mammalia</taxon>
        <taxon>Eutheria</taxon>
        <taxon>Euarchontoglires</taxon>
        <taxon>Primates</taxon>
        <taxon>Haplorrhini</taxon>
        <taxon>Catarrhini</taxon>
        <taxon>Hominidae</taxon>
        <taxon>Pan</taxon>
    </lineage>
</organism>
<feature type="chain" id="PRO_0000075345" description="Aryl-hydrocarbon-interacting protein-like 1">
    <location>
        <begin position="1"/>
        <end position="384"/>
    </location>
</feature>
<feature type="domain" description="PPIase FKBP-type">
    <location>
        <begin position="53"/>
        <end position="145"/>
    </location>
</feature>
<feature type="repeat" description="TPR 1">
    <location>
        <begin position="178"/>
        <end position="211"/>
    </location>
</feature>
<feature type="repeat" description="TPR 2">
    <location>
        <begin position="230"/>
        <end position="263"/>
    </location>
</feature>
<feature type="repeat" description="TPR 3">
    <location>
        <begin position="264"/>
        <end position="297"/>
    </location>
</feature>
<feature type="region of interest" description="Disordered" evidence="2">
    <location>
        <begin position="328"/>
        <end position="384"/>
    </location>
</feature>
<feature type="compositionally biased region" description="Low complexity" evidence="2">
    <location>
        <begin position="359"/>
        <end position="372"/>
    </location>
</feature>
<evidence type="ECO:0000250" key="1"/>
<evidence type="ECO:0000256" key="2">
    <source>
        <dbReference type="SAM" id="MobiDB-lite"/>
    </source>
</evidence>
<comment type="function">
    <text evidence="1">May be important in protein trafficking and/or protein folding and stabilization.</text>
</comment>
<comment type="subunit">
    <text evidence="1">Interacts with NUB1.</text>
</comment>
<comment type="subcellular location">
    <subcellularLocation>
        <location evidence="1">Cytoplasm</location>
    </subcellularLocation>
    <subcellularLocation>
        <location evidence="1">Nucleus</location>
    </subcellularLocation>
</comment>